<feature type="chain" id="PRO_0000435721" description="Basic leucine zipper 23">
    <location>
        <begin position="1"/>
        <end position="249"/>
    </location>
</feature>
<feature type="domain" description="bZIP" evidence="1">
    <location>
        <begin position="74"/>
        <end position="121"/>
    </location>
</feature>
<feature type="region of interest" description="Disordered" evidence="2">
    <location>
        <begin position="66"/>
        <end position="90"/>
    </location>
</feature>
<feature type="region of interest" description="Basic motif" evidence="1">
    <location>
        <begin position="78"/>
        <end position="98"/>
    </location>
</feature>
<feature type="region of interest" description="Leucine-zipper" evidence="1">
    <location>
        <begin position="102"/>
        <end position="116"/>
    </location>
</feature>
<accession>Q8GTS2</accession>
<accession>Q9SLE1</accession>
<proteinExistence type="evidence at transcript level"/>
<reference key="1">
    <citation type="journal article" date="1999" name="Nature">
        <title>Sequence and analysis of chromosome 2 of the plant Arabidopsis thaliana.</title>
        <authorList>
            <person name="Lin X."/>
            <person name="Kaul S."/>
            <person name="Rounsley S.D."/>
            <person name="Shea T.P."/>
            <person name="Benito M.-I."/>
            <person name="Town C.D."/>
            <person name="Fujii C.Y."/>
            <person name="Mason T.M."/>
            <person name="Bowman C.L."/>
            <person name="Barnstead M.E."/>
            <person name="Feldblyum T.V."/>
            <person name="Buell C.R."/>
            <person name="Ketchum K.A."/>
            <person name="Lee J.J."/>
            <person name="Ronning C.M."/>
            <person name="Koo H.L."/>
            <person name="Moffat K.S."/>
            <person name="Cronin L.A."/>
            <person name="Shen M."/>
            <person name="Pai G."/>
            <person name="Van Aken S."/>
            <person name="Umayam L."/>
            <person name="Tallon L.J."/>
            <person name="Gill J.E."/>
            <person name="Adams M.D."/>
            <person name="Carrera A.J."/>
            <person name="Creasy T.H."/>
            <person name="Goodman H.M."/>
            <person name="Somerville C.R."/>
            <person name="Copenhaver G.P."/>
            <person name="Preuss D."/>
            <person name="Nierman W.C."/>
            <person name="White O."/>
            <person name="Eisen J.A."/>
            <person name="Salzberg S.L."/>
            <person name="Fraser C.M."/>
            <person name="Venter J.C."/>
        </authorList>
    </citation>
    <scope>NUCLEOTIDE SEQUENCE [LARGE SCALE GENOMIC DNA]</scope>
    <source>
        <strain>cv. Columbia</strain>
    </source>
</reference>
<reference key="2">
    <citation type="journal article" date="2017" name="Plant J.">
        <title>Araport11: a complete reannotation of the Arabidopsis thaliana reference genome.</title>
        <authorList>
            <person name="Cheng C.Y."/>
            <person name="Krishnakumar V."/>
            <person name="Chan A.P."/>
            <person name="Thibaud-Nissen F."/>
            <person name="Schobel S."/>
            <person name="Town C.D."/>
        </authorList>
    </citation>
    <scope>GENOME REANNOTATION</scope>
    <source>
        <strain>cv. Columbia</strain>
    </source>
</reference>
<reference key="3">
    <citation type="journal article" date="2002" name="Science">
        <title>Functional annotation of a full-length Arabidopsis cDNA collection.</title>
        <authorList>
            <person name="Seki M."/>
            <person name="Narusaka M."/>
            <person name="Kamiya A."/>
            <person name="Ishida J."/>
            <person name="Satou M."/>
            <person name="Sakurai T."/>
            <person name="Nakajima M."/>
            <person name="Enju A."/>
            <person name="Akiyama K."/>
            <person name="Oono Y."/>
            <person name="Muramatsu M."/>
            <person name="Hayashizaki Y."/>
            <person name="Kawai J."/>
            <person name="Carninci P."/>
            <person name="Itoh M."/>
            <person name="Ishii Y."/>
            <person name="Arakawa T."/>
            <person name="Shibata K."/>
            <person name="Shinagawa A."/>
            <person name="Shinozaki K."/>
        </authorList>
    </citation>
    <scope>NUCLEOTIDE SEQUENCE [LARGE SCALE MRNA]</scope>
    <source>
        <strain>cv. Columbia</strain>
    </source>
</reference>
<reference key="4">
    <citation type="submission" date="2006-09" db="EMBL/GenBank/DDBJ databases">
        <title>Arabidopsis ORF clones.</title>
        <authorList>
            <person name="Bautista V.R."/>
            <person name="Kim C.J."/>
            <person name="Chen H."/>
            <person name="Quinitio C."/>
            <person name="Ecker J.R."/>
        </authorList>
    </citation>
    <scope>NUCLEOTIDE SEQUENCE [LARGE SCALE MRNA]</scope>
    <source>
        <strain>cv. Columbia</strain>
    </source>
</reference>
<reference key="5">
    <citation type="journal article" date="2002" name="Trends Plant Sci.">
        <title>bZIP transcription factors in Arabidopsis.</title>
        <authorList>
            <person name="Jakoby M."/>
            <person name="Weisshaar B."/>
            <person name="Droege-Laser W."/>
            <person name="Vicente-Carbajosa J."/>
            <person name="Tiedemann J."/>
            <person name="Kroj T."/>
            <person name="Parcy F."/>
        </authorList>
    </citation>
    <scope>GENE FAMILY</scope>
    <scope>NOMENCLATURE</scope>
</reference>
<reference key="6">
    <citation type="journal article" date="2010" name="Proc. Natl. Acad. Sci. U.S.A.">
        <title>Arabidopsis thaliana transcription factors bZIP19 and bZIP23 regulate the adaptation to zinc deficiency.</title>
        <authorList>
            <person name="Assuncao A.G."/>
            <person name="Herrero E."/>
            <person name="Lin Y.F."/>
            <person name="Huettel B."/>
            <person name="Talukdar S."/>
            <person name="Smaczniak C."/>
            <person name="Immink R.G."/>
            <person name="van Eldik M."/>
            <person name="Fiers M."/>
            <person name="Schat H."/>
            <person name="Aarts M.G."/>
        </authorList>
    </citation>
    <scope>FUNCTION</scope>
    <scope>INDUCTION</scope>
    <scope>DISRUPTION PHENOTYPE</scope>
</reference>
<reference key="7">
    <citation type="journal article" date="2015" name="Plant J.">
        <title>Identification of putative target genes of bZIP19, a transcription factor essential for Arabidopsis adaptation to Zn deficiency in roots.</title>
        <authorList>
            <person name="Inaba S."/>
            <person name="Kurata R."/>
            <person name="Kobayashi M."/>
            <person name="Yamagishi Y."/>
            <person name="Mori I."/>
            <person name="Ogata Y."/>
            <person name="Fukao Y."/>
        </authorList>
    </citation>
    <scope>FUNCTION</scope>
    <scope>SUBCELLULAR LOCATION</scope>
    <scope>DISRUPTION PHENOTYPE</scope>
</reference>
<evidence type="ECO:0000255" key="1">
    <source>
        <dbReference type="PROSITE-ProRule" id="PRU00978"/>
    </source>
</evidence>
<evidence type="ECO:0000256" key="2">
    <source>
        <dbReference type="SAM" id="MobiDB-lite"/>
    </source>
</evidence>
<evidence type="ECO:0000269" key="3">
    <source>
    </source>
</evidence>
<evidence type="ECO:0000269" key="4">
    <source>
    </source>
</evidence>
<evidence type="ECO:0000303" key="5">
    <source>
    </source>
</evidence>
<evidence type="ECO:0000305" key="6"/>
<evidence type="ECO:0000312" key="7">
    <source>
        <dbReference type="Araport" id="AT2G16770"/>
    </source>
</evidence>
<gene>
    <name evidence="5" type="primary">BZIP23</name>
    <name evidence="7" type="ordered locus">At2g16770</name>
</gene>
<protein>
    <recommendedName>
        <fullName evidence="5">Basic leucine zipper 23</fullName>
        <shortName evidence="5">AtbZIP23</shortName>
        <shortName evidence="6">bZIP protein 23</shortName>
    </recommendedName>
</protein>
<comment type="function">
    <text evidence="3 4">Transcription factor involved in the response to zinc ion deficiency. Binds to the consensus sequence 5'-[AG]TGTCGACA[CT]-3' also called zinc deficiency response element (ZDRE). The ZDRE sequence is conserved in the plant kingdom and present in the promoters of genes that constitute the primary response to zinc deficiency, comprising additional ZIP metal transporter genes (PubMed:20479230, PubMed:26306426). Required for zinc accumulation in roots. Mediates the expression of the zinc transporter ZIP12 during growth in zinc-deficient conditions. ZIP12 transporter is involved in zinc uptake in roots (PubMed:26306426).</text>
</comment>
<comment type="subcellular location">
    <subcellularLocation>
        <location evidence="1 4">Nucleus</location>
    </subcellularLocation>
</comment>
<comment type="induction">
    <text evidence="3">Induced by zinc deficiency.</text>
</comment>
<comment type="disruption phenotype">
    <text evidence="3 4">No visible phenotype under normal growth conditions (PubMed:20479230, PubMed:26306426). Mutant seedlings grown under normal conditions accumulate reduced levels of zinc in roots. Mutant seedlings grown in zinc-depleted medium have reduced root length (PubMed:26306426).</text>
</comment>
<comment type="sequence caution" evidence="6">
    <conflict type="erroneous gene model prediction">
        <sequence resource="EMBL-CDS" id="AAD24610"/>
    </conflict>
</comment>
<organism>
    <name type="scientific">Arabidopsis thaliana</name>
    <name type="common">Mouse-ear cress</name>
    <dbReference type="NCBI Taxonomy" id="3702"/>
    <lineage>
        <taxon>Eukaryota</taxon>
        <taxon>Viridiplantae</taxon>
        <taxon>Streptophyta</taxon>
        <taxon>Embryophyta</taxon>
        <taxon>Tracheophyta</taxon>
        <taxon>Spermatophyta</taxon>
        <taxon>Magnoliopsida</taxon>
        <taxon>eudicotyledons</taxon>
        <taxon>Gunneridae</taxon>
        <taxon>Pentapetalae</taxon>
        <taxon>rosids</taxon>
        <taxon>malvids</taxon>
        <taxon>Brassicales</taxon>
        <taxon>Brassicaceae</taxon>
        <taxon>Camelineae</taxon>
        <taxon>Arabidopsis</taxon>
    </lineage>
</organism>
<sequence>MDDGELEFSNSNMGGELPSCSMDSFFDELLRDSHACTHTHTCNPPGPENTHTHTCLHVHTKILPDKVSTDDTSESSGKKRPLGNREAVRKYREKKKAKAASLEDEVMRLKAVNNQLLKRLQGQAALEAEVTRLKCLLVDIRGRIDGEIGAFPYQKPAVTNVPYSYMMHPCNMQCDVDNLYCLQNGNNGEGASMNEQGLNGCEFDQLECLANQNLAGKEIPVCSNGIGTFTVNGSGVNKRKGEPRAAKAV</sequence>
<name>BZP23_ARATH</name>
<dbReference type="EMBL" id="AC005825">
    <property type="protein sequence ID" value="AAD24610.1"/>
    <property type="status" value="ALT_SEQ"/>
    <property type="molecule type" value="Genomic_DNA"/>
</dbReference>
<dbReference type="EMBL" id="CP002685">
    <property type="protein sequence ID" value="AEC06536.1"/>
    <property type="molecule type" value="Genomic_DNA"/>
</dbReference>
<dbReference type="EMBL" id="CP002685">
    <property type="protein sequence ID" value="ANM61918.1"/>
    <property type="molecule type" value="Genomic_DNA"/>
</dbReference>
<dbReference type="EMBL" id="AK117479">
    <property type="protein sequence ID" value="BAC42143.1"/>
    <property type="molecule type" value="mRNA"/>
</dbReference>
<dbReference type="EMBL" id="BT029022">
    <property type="protein sequence ID" value="ABI93931.1"/>
    <property type="molecule type" value="mRNA"/>
</dbReference>
<dbReference type="PIR" id="A84544">
    <property type="entry name" value="A84544"/>
</dbReference>
<dbReference type="RefSeq" id="NP_001324107.1">
    <property type="nucleotide sequence ID" value="NM_001335489.1"/>
</dbReference>
<dbReference type="RefSeq" id="NP_179268.2">
    <property type="nucleotide sequence ID" value="NM_127229.3"/>
</dbReference>
<dbReference type="SMR" id="Q8GTS2"/>
<dbReference type="FunCoup" id="Q8GTS2">
    <property type="interactions" value="707"/>
</dbReference>
<dbReference type="IntAct" id="Q8GTS2">
    <property type="interactions" value="1"/>
</dbReference>
<dbReference type="STRING" id="3702.Q8GTS2"/>
<dbReference type="PaxDb" id="3702-AT2G16770.1"/>
<dbReference type="ProteomicsDB" id="240514"/>
<dbReference type="EnsemblPlants" id="AT2G16770.1">
    <property type="protein sequence ID" value="AT2G16770.1"/>
    <property type="gene ID" value="AT2G16770"/>
</dbReference>
<dbReference type="EnsemblPlants" id="AT2G16770.2">
    <property type="protein sequence ID" value="AT2G16770.2"/>
    <property type="gene ID" value="AT2G16770"/>
</dbReference>
<dbReference type="GeneID" id="816178"/>
<dbReference type="Gramene" id="AT2G16770.1">
    <property type="protein sequence ID" value="AT2G16770.1"/>
    <property type="gene ID" value="AT2G16770"/>
</dbReference>
<dbReference type="Gramene" id="AT2G16770.2">
    <property type="protein sequence ID" value="AT2G16770.2"/>
    <property type="gene ID" value="AT2G16770"/>
</dbReference>
<dbReference type="KEGG" id="ath:AT2G16770"/>
<dbReference type="Araport" id="AT2G16770"/>
<dbReference type="TAIR" id="AT2G16770">
    <property type="gene designation" value="BZIP23"/>
</dbReference>
<dbReference type="eggNOG" id="ENOG502QVJ4">
    <property type="taxonomic scope" value="Eukaryota"/>
</dbReference>
<dbReference type="HOGENOM" id="CLU_065260_1_0_1"/>
<dbReference type="InParanoid" id="Q8GTS2"/>
<dbReference type="OMA" id="HACIHAH"/>
<dbReference type="OrthoDB" id="1905076at2759"/>
<dbReference type="PhylomeDB" id="Q8GTS2"/>
<dbReference type="PRO" id="PR:Q8GTS2"/>
<dbReference type="Proteomes" id="UP000006548">
    <property type="component" value="Chromosome 2"/>
</dbReference>
<dbReference type="ExpressionAtlas" id="Q8GTS2">
    <property type="expression patterns" value="baseline and differential"/>
</dbReference>
<dbReference type="GO" id="GO:0005634">
    <property type="term" value="C:nucleus"/>
    <property type="evidence" value="ECO:0000314"/>
    <property type="project" value="UniProtKB"/>
</dbReference>
<dbReference type="GO" id="GO:0003677">
    <property type="term" value="F:DNA binding"/>
    <property type="evidence" value="ECO:0000314"/>
    <property type="project" value="TAIR"/>
</dbReference>
<dbReference type="GO" id="GO:0003700">
    <property type="term" value="F:DNA-binding transcription factor activity"/>
    <property type="evidence" value="ECO:0000250"/>
    <property type="project" value="TAIR"/>
</dbReference>
<dbReference type="GO" id="GO:0006351">
    <property type="term" value="P:DNA-templated transcription"/>
    <property type="evidence" value="ECO:0007669"/>
    <property type="project" value="InterPro"/>
</dbReference>
<dbReference type="GO" id="GO:0010043">
    <property type="term" value="P:response to zinc ion"/>
    <property type="evidence" value="ECO:0000270"/>
    <property type="project" value="TAIR"/>
</dbReference>
<dbReference type="CDD" id="cd14686">
    <property type="entry name" value="bZIP"/>
    <property type="match status" value="1"/>
</dbReference>
<dbReference type="FunFam" id="1.20.5.170:FF:000098">
    <property type="entry name" value="Basic leucine zipper 24"/>
    <property type="match status" value="1"/>
</dbReference>
<dbReference type="Gene3D" id="1.20.5.170">
    <property type="match status" value="1"/>
</dbReference>
<dbReference type="InterPro" id="IPR004827">
    <property type="entry name" value="bZIP"/>
</dbReference>
<dbReference type="InterPro" id="IPR046347">
    <property type="entry name" value="bZIP_sf"/>
</dbReference>
<dbReference type="InterPro" id="IPR031106">
    <property type="entry name" value="C/EBP"/>
</dbReference>
<dbReference type="PANTHER" id="PTHR23334:SF49">
    <property type="entry name" value="BASIC LEUCINE ZIPPER 23"/>
    <property type="match status" value="1"/>
</dbReference>
<dbReference type="PANTHER" id="PTHR23334">
    <property type="entry name" value="CCAAT/ENHANCER BINDING PROTEIN"/>
    <property type="match status" value="1"/>
</dbReference>
<dbReference type="Pfam" id="PF07716">
    <property type="entry name" value="bZIP_2"/>
    <property type="match status" value="1"/>
</dbReference>
<dbReference type="SMART" id="SM00338">
    <property type="entry name" value="BRLZ"/>
    <property type="match status" value="1"/>
</dbReference>
<dbReference type="SUPFAM" id="SSF57959">
    <property type="entry name" value="Leucine zipper domain"/>
    <property type="match status" value="1"/>
</dbReference>
<dbReference type="PROSITE" id="PS50217">
    <property type="entry name" value="BZIP"/>
    <property type="match status" value="1"/>
</dbReference>
<keyword id="KW-0238">DNA-binding</keyword>
<keyword id="KW-0539">Nucleus</keyword>
<keyword id="KW-1185">Reference proteome</keyword>
<keyword id="KW-0804">Transcription</keyword>
<keyword id="KW-0805">Transcription regulation</keyword>